<protein>
    <recommendedName>
        <fullName>Probable E3 ubiquitin ligase complex SCF subunit sconB</fullName>
    </recommendedName>
    <alternativeName>
        <fullName>Sulfur controller B</fullName>
    </alternativeName>
    <alternativeName>
        <fullName>Sulfur metabolite repression control protein B</fullName>
    </alternativeName>
</protein>
<keyword id="KW-1185">Reference proteome</keyword>
<keyword id="KW-0677">Repeat</keyword>
<keyword id="KW-0804">Transcription</keyword>
<keyword id="KW-0805">Transcription regulation</keyword>
<keyword id="KW-0833">Ubl conjugation pathway</keyword>
<keyword id="KW-0853">WD repeat</keyword>
<name>SCONB_ARTOC</name>
<sequence>MATDTPPQLAGPPTPAMETLDRDVVMSPRKRRRLSASAEPELTEPESDGTSGGRGAAAEAPETAALEPKSLFNSTSTESSITSSSTTTTTTSSSSSIAPFLAKHIRDQHASRNRFAPADSSLPRRKADSKYCYRHRPDLKCRRQADEPTVDQMQRDLSTLSQNDQQSIAHFWSLFSAAPSKHRNLMLQGIVAQCCFPQLSFLSASVRDLIRIDFVTALPPEISFKILSYLDTASLCNAAQVSRNWRHLADDDVVWHRMCEQHIDRKCEKCGWGLPMLDRKRLKDTKRQVQLRAAGKEAVTGRQQQQHRPWKAVYMDRFKVGTNWKYGRCTTTIFRGHTNGVMCLQFDDNILATGSYDATIKIWDIETGKEIRTLRGHESTIRCLQFDDTKLISGSLDRTIKVWSWRSGECISTYTGHQGGVLCLHFDSTTLASGSKDNTIKIWNFQDKSTQILRGHTDWVNAVKLDTASRTVFSASDDLTVRIWDLDTGKCIHTYAGHVGQVQQVLPLPREFEFKHTSHCDDDRSDRLSGSESPDHRASHDSNHAPDLPTTSAPPTQPMSPLFEALFNEDRPAPPRYMLTAALDSTLRLWEVHTGRCLRTFFGHIEGVWGLAADTLRLVSGAQDHMTKVWDPRTGTCERTFTGHRGPVTCVSLSDSRMATGSEDCEVRMYSFKA</sequence>
<accession>C5FP68</accession>
<evidence type="ECO:0000250" key="1"/>
<evidence type="ECO:0000255" key="2">
    <source>
        <dbReference type="PROSITE-ProRule" id="PRU00080"/>
    </source>
</evidence>
<evidence type="ECO:0000256" key="3">
    <source>
        <dbReference type="SAM" id="MobiDB-lite"/>
    </source>
</evidence>
<evidence type="ECO:0000305" key="4"/>
<gene>
    <name type="primary">sconB</name>
    <name type="ORF">MCYG_04203</name>
</gene>
<dbReference type="EMBL" id="DS995704">
    <property type="protein sequence ID" value="EEQ31384.1"/>
    <property type="molecule type" value="Genomic_DNA"/>
</dbReference>
<dbReference type="RefSeq" id="XP_002846466.1">
    <property type="nucleotide sequence ID" value="XM_002846420.1"/>
</dbReference>
<dbReference type="SMR" id="C5FP68"/>
<dbReference type="STRING" id="554155.C5FP68"/>
<dbReference type="GeneID" id="9224536"/>
<dbReference type="VEuPathDB" id="FungiDB:MCYG_04203"/>
<dbReference type="eggNOG" id="KOG0274">
    <property type="taxonomic scope" value="Eukaryota"/>
</dbReference>
<dbReference type="HOGENOM" id="CLU_000288_103_1_1"/>
<dbReference type="OMA" id="GIAHVWS"/>
<dbReference type="OrthoDB" id="5580488at2759"/>
<dbReference type="UniPathway" id="UPA00143"/>
<dbReference type="Proteomes" id="UP000002035">
    <property type="component" value="Unassembled WGS sequence"/>
</dbReference>
<dbReference type="GO" id="GO:0016567">
    <property type="term" value="P:protein ubiquitination"/>
    <property type="evidence" value="ECO:0007669"/>
    <property type="project" value="UniProtKB-UniPathway"/>
</dbReference>
<dbReference type="CDD" id="cd22147">
    <property type="entry name" value="F-box_SpPof1-like"/>
    <property type="match status" value="1"/>
</dbReference>
<dbReference type="CDD" id="cd00200">
    <property type="entry name" value="WD40"/>
    <property type="match status" value="1"/>
</dbReference>
<dbReference type="FunFam" id="1.20.1280.50:FF:000016">
    <property type="entry name" value="E3 ubiquitin ligase complex SCF subunit sconB"/>
    <property type="match status" value="1"/>
</dbReference>
<dbReference type="FunFam" id="2.130.10.10:FF:000715">
    <property type="entry name" value="F-box protein MET30"/>
    <property type="match status" value="1"/>
</dbReference>
<dbReference type="FunFam" id="2.130.10.10:FF:000890">
    <property type="entry name" value="Probable E3 ubiquitin ligase complex SCF subunit sconB"/>
    <property type="match status" value="1"/>
</dbReference>
<dbReference type="Gene3D" id="1.20.1280.50">
    <property type="match status" value="1"/>
</dbReference>
<dbReference type="Gene3D" id="2.130.10.10">
    <property type="entry name" value="YVTN repeat-like/Quinoprotein amine dehydrogenase"/>
    <property type="match status" value="3"/>
</dbReference>
<dbReference type="InterPro" id="IPR036047">
    <property type="entry name" value="F-box-like_dom_sf"/>
</dbReference>
<dbReference type="InterPro" id="IPR001810">
    <property type="entry name" value="F-box_dom"/>
</dbReference>
<dbReference type="InterPro" id="IPR020472">
    <property type="entry name" value="G-protein_beta_WD-40_rep"/>
</dbReference>
<dbReference type="InterPro" id="IPR011047">
    <property type="entry name" value="Quinoprotein_ADH-like_sf"/>
</dbReference>
<dbReference type="InterPro" id="IPR051075">
    <property type="entry name" value="SCF_subunit_WD-repeat"/>
</dbReference>
<dbReference type="InterPro" id="IPR015943">
    <property type="entry name" value="WD40/YVTN_repeat-like_dom_sf"/>
</dbReference>
<dbReference type="InterPro" id="IPR019775">
    <property type="entry name" value="WD40_repeat_CS"/>
</dbReference>
<dbReference type="InterPro" id="IPR001680">
    <property type="entry name" value="WD40_rpt"/>
</dbReference>
<dbReference type="PANTHER" id="PTHR19872">
    <property type="entry name" value="UBIQUITIN LIGASE SPECIFICITY FACTOR/HREP PROTEIN"/>
    <property type="match status" value="1"/>
</dbReference>
<dbReference type="PANTHER" id="PTHR19872:SF9">
    <property type="entry name" value="UBIQUITIN-BINDING SDF UBIQUITIN LIGASE COMPLEX SUBUNIT"/>
    <property type="match status" value="1"/>
</dbReference>
<dbReference type="Pfam" id="PF12937">
    <property type="entry name" value="F-box-like"/>
    <property type="match status" value="1"/>
</dbReference>
<dbReference type="Pfam" id="PF00400">
    <property type="entry name" value="WD40"/>
    <property type="match status" value="6"/>
</dbReference>
<dbReference type="PRINTS" id="PR00320">
    <property type="entry name" value="GPROTEINBRPT"/>
</dbReference>
<dbReference type="SMART" id="SM00256">
    <property type="entry name" value="FBOX"/>
    <property type="match status" value="1"/>
</dbReference>
<dbReference type="SMART" id="SM00320">
    <property type="entry name" value="WD40"/>
    <property type="match status" value="7"/>
</dbReference>
<dbReference type="SUPFAM" id="SSF81383">
    <property type="entry name" value="F-box domain"/>
    <property type="match status" value="1"/>
</dbReference>
<dbReference type="SUPFAM" id="SSF50998">
    <property type="entry name" value="Quinoprotein alcohol dehydrogenase-like"/>
    <property type="match status" value="1"/>
</dbReference>
<dbReference type="PROSITE" id="PS50181">
    <property type="entry name" value="FBOX"/>
    <property type="match status" value="1"/>
</dbReference>
<dbReference type="PROSITE" id="PS00678">
    <property type="entry name" value="WD_REPEATS_1"/>
    <property type="match status" value="4"/>
</dbReference>
<dbReference type="PROSITE" id="PS50082">
    <property type="entry name" value="WD_REPEATS_2"/>
    <property type="match status" value="7"/>
</dbReference>
<dbReference type="PROSITE" id="PS50294">
    <property type="entry name" value="WD_REPEATS_REGION"/>
    <property type="match status" value="1"/>
</dbReference>
<comment type="function">
    <text evidence="1">Component of the SCF(sconB) E3 ubiquitin ligase complex involved in the regulation of sulfur metabolite repression, probably by mediating the inactivation or degradation of the metR transcription factor.</text>
</comment>
<comment type="pathway">
    <text>Protein modification; protein ubiquitination.</text>
</comment>
<comment type="subunit">
    <text evidence="1">Component of the SCF(sconB) E3 ubiquitin ligase complex.</text>
</comment>
<comment type="similarity">
    <text evidence="4">Belongs to the WD repeat MET30/SCONB/SCON-2 family.</text>
</comment>
<proteinExistence type="inferred from homology"/>
<feature type="chain" id="PRO_0000397252" description="Probable E3 ubiquitin ligase complex SCF subunit sconB">
    <location>
        <begin position="1"/>
        <end position="674"/>
    </location>
</feature>
<feature type="domain" description="F-box" evidence="2">
    <location>
        <begin position="212"/>
        <end position="258"/>
    </location>
</feature>
<feature type="repeat" description="WD 1">
    <location>
        <begin position="336"/>
        <end position="375"/>
    </location>
</feature>
<feature type="repeat" description="WD 2">
    <location>
        <begin position="377"/>
        <end position="415"/>
    </location>
</feature>
<feature type="repeat" description="WD 3">
    <location>
        <begin position="416"/>
        <end position="453"/>
    </location>
</feature>
<feature type="repeat" description="WD 4">
    <location>
        <begin position="455"/>
        <end position="496"/>
    </location>
</feature>
<feature type="repeat" description="WD 5">
    <location>
        <begin position="557"/>
        <end position="600"/>
    </location>
</feature>
<feature type="repeat" description="WD 6">
    <location>
        <begin position="603"/>
        <end position="640"/>
    </location>
</feature>
<feature type="repeat" description="WD 7">
    <location>
        <begin position="643"/>
        <end position="674"/>
    </location>
</feature>
<feature type="region of interest" description="Disordered" evidence="3">
    <location>
        <begin position="1"/>
        <end position="96"/>
    </location>
</feature>
<feature type="region of interest" description="Disordered" evidence="3">
    <location>
        <begin position="518"/>
        <end position="561"/>
    </location>
</feature>
<feature type="compositionally biased region" description="Low complexity" evidence="3">
    <location>
        <begin position="56"/>
        <end position="96"/>
    </location>
</feature>
<feature type="compositionally biased region" description="Basic and acidic residues" evidence="3">
    <location>
        <begin position="518"/>
        <end position="544"/>
    </location>
</feature>
<organism>
    <name type="scientific">Arthroderma otae (strain ATCC MYA-4605 / CBS 113480)</name>
    <name type="common">Microsporum canis</name>
    <dbReference type="NCBI Taxonomy" id="554155"/>
    <lineage>
        <taxon>Eukaryota</taxon>
        <taxon>Fungi</taxon>
        <taxon>Dikarya</taxon>
        <taxon>Ascomycota</taxon>
        <taxon>Pezizomycotina</taxon>
        <taxon>Eurotiomycetes</taxon>
        <taxon>Eurotiomycetidae</taxon>
        <taxon>Onygenales</taxon>
        <taxon>Arthrodermataceae</taxon>
        <taxon>Microsporum</taxon>
    </lineage>
</organism>
<reference key="1">
    <citation type="journal article" date="2012" name="MBio">
        <title>Comparative genome analysis of Trichophyton rubrum and related dermatophytes reveals candidate genes involved in infection.</title>
        <authorList>
            <person name="Martinez D.A."/>
            <person name="Oliver B.G."/>
            <person name="Graeser Y."/>
            <person name="Goldberg J.M."/>
            <person name="Li W."/>
            <person name="Martinez-Rossi N.M."/>
            <person name="Monod M."/>
            <person name="Shelest E."/>
            <person name="Barton R.C."/>
            <person name="Birch E."/>
            <person name="Brakhage A.A."/>
            <person name="Chen Z."/>
            <person name="Gurr S.J."/>
            <person name="Heiman D."/>
            <person name="Heitman J."/>
            <person name="Kosti I."/>
            <person name="Rossi A."/>
            <person name="Saif S."/>
            <person name="Samalova M."/>
            <person name="Saunders C.W."/>
            <person name="Shea T."/>
            <person name="Summerbell R.C."/>
            <person name="Xu J."/>
            <person name="Young S."/>
            <person name="Zeng Q."/>
            <person name="Birren B.W."/>
            <person name="Cuomo C.A."/>
            <person name="White T.C."/>
        </authorList>
    </citation>
    <scope>NUCLEOTIDE SEQUENCE [LARGE SCALE GENOMIC DNA]</scope>
    <source>
        <strain>ATCC MYA-4605 / CBS 113480</strain>
    </source>
</reference>